<organism>
    <name type="scientific">Rhodopseudomonas palustris (strain TIE-1)</name>
    <dbReference type="NCBI Taxonomy" id="395960"/>
    <lineage>
        <taxon>Bacteria</taxon>
        <taxon>Pseudomonadati</taxon>
        <taxon>Pseudomonadota</taxon>
        <taxon>Alphaproteobacteria</taxon>
        <taxon>Hyphomicrobiales</taxon>
        <taxon>Nitrobacteraceae</taxon>
        <taxon>Rhodopseudomonas</taxon>
    </lineage>
</organism>
<evidence type="ECO:0000255" key="1">
    <source>
        <dbReference type="HAMAP-Rule" id="MF_01345"/>
    </source>
</evidence>
<evidence type="ECO:0000305" key="2"/>
<dbReference type="EMBL" id="CP001096">
    <property type="protein sequence ID" value="ACF02158.1"/>
    <property type="molecule type" value="Genomic_DNA"/>
</dbReference>
<dbReference type="RefSeq" id="WP_011158786.1">
    <property type="nucleotide sequence ID" value="NC_011004.1"/>
</dbReference>
<dbReference type="SMR" id="B3QBX1"/>
<dbReference type="GeneID" id="66894327"/>
<dbReference type="KEGG" id="rpt:Rpal_3658"/>
<dbReference type="HOGENOM" id="CLU_073626_1_1_5"/>
<dbReference type="OrthoDB" id="9811714at2"/>
<dbReference type="Proteomes" id="UP000001725">
    <property type="component" value="Chromosome"/>
</dbReference>
<dbReference type="GO" id="GO:0022627">
    <property type="term" value="C:cytosolic small ribosomal subunit"/>
    <property type="evidence" value="ECO:0007669"/>
    <property type="project" value="TreeGrafter"/>
</dbReference>
<dbReference type="GO" id="GO:0019843">
    <property type="term" value="F:rRNA binding"/>
    <property type="evidence" value="ECO:0007669"/>
    <property type="project" value="UniProtKB-UniRule"/>
</dbReference>
<dbReference type="GO" id="GO:0003735">
    <property type="term" value="F:structural constituent of ribosome"/>
    <property type="evidence" value="ECO:0007669"/>
    <property type="project" value="InterPro"/>
</dbReference>
<dbReference type="GO" id="GO:0006412">
    <property type="term" value="P:translation"/>
    <property type="evidence" value="ECO:0007669"/>
    <property type="project" value="UniProtKB-UniRule"/>
</dbReference>
<dbReference type="CDD" id="cd00364">
    <property type="entry name" value="Ribosomal_uS17"/>
    <property type="match status" value="1"/>
</dbReference>
<dbReference type="FunFam" id="2.40.50.140:FF:000204">
    <property type="entry name" value="30S ribosomal protein S17"/>
    <property type="match status" value="1"/>
</dbReference>
<dbReference type="Gene3D" id="2.40.50.140">
    <property type="entry name" value="Nucleic acid-binding proteins"/>
    <property type="match status" value="1"/>
</dbReference>
<dbReference type="HAMAP" id="MF_01345_B">
    <property type="entry name" value="Ribosomal_uS17_B"/>
    <property type="match status" value="1"/>
</dbReference>
<dbReference type="InterPro" id="IPR012340">
    <property type="entry name" value="NA-bd_OB-fold"/>
</dbReference>
<dbReference type="InterPro" id="IPR000266">
    <property type="entry name" value="Ribosomal_uS17"/>
</dbReference>
<dbReference type="InterPro" id="IPR019984">
    <property type="entry name" value="Ribosomal_uS17_bact/chlr"/>
</dbReference>
<dbReference type="InterPro" id="IPR019979">
    <property type="entry name" value="Ribosomal_uS17_CS"/>
</dbReference>
<dbReference type="NCBIfam" id="NF004123">
    <property type="entry name" value="PRK05610.1"/>
    <property type="match status" value="1"/>
</dbReference>
<dbReference type="NCBIfam" id="TIGR03635">
    <property type="entry name" value="uS17_bact"/>
    <property type="match status" value="1"/>
</dbReference>
<dbReference type="PANTHER" id="PTHR10744">
    <property type="entry name" value="40S RIBOSOMAL PROTEIN S11 FAMILY MEMBER"/>
    <property type="match status" value="1"/>
</dbReference>
<dbReference type="PANTHER" id="PTHR10744:SF1">
    <property type="entry name" value="SMALL RIBOSOMAL SUBUNIT PROTEIN US17M"/>
    <property type="match status" value="1"/>
</dbReference>
<dbReference type="Pfam" id="PF00366">
    <property type="entry name" value="Ribosomal_S17"/>
    <property type="match status" value="1"/>
</dbReference>
<dbReference type="PRINTS" id="PR00973">
    <property type="entry name" value="RIBOSOMALS17"/>
</dbReference>
<dbReference type="SUPFAM" id="SSF50249">
    <property type="entry name" value="Nucleic acid-binding proteins"/>
    <property type="match status" value="1"/>
</dbReference>
<dbReference type="PROSITE" id="PS00056">
    <property type="entry name" value="RIBOSOMAL_S17"/>
    <property type="match status" value="1"/>
</dbReference>
<proteinExistence type="inferred from homology"/>
<sequence length="82" mass="9685">MPKRTLQGVVVSDKQAKTIVVRVDRRFTHPIYKKTIRRSKNYHAHDENNQFKPGDMVWIEESKPISKLKRWTVVRGEPKKTA</sequence>
<name>RS17_RHOPT</name>
<reference key="1">
    <citation type="submission" date="2008-05" db="EMBL/GenBank/DDBJ databases">
        <title>Complete sequence of Rhodopseudomonas palustris TIE-1.</title>
        <authorList>
            <consortium name="US DOE Joint Genome Institute"/>
            <person name="Lucas S."/>
            <person name="Copeland A."/>
            <person name="Lapidus A."/>
            <person name="Glavina del Rio T."/>
            <person name="Dalin E."/>
            <person name="Tice H."/>
            <person name="Pitluck S."/>
            <person name="Chain P."/>
            <person name="Malfatti S."/>
            <person name="Shin M."/>
            <person name="Vergez L."/>
            <person name="Lang D."/>
            <person name="Schmutz J."/>
            <person name="Larimer F."/>
            <person name="Land M."/>
            <person name="Hauser L."/>
            <person name="Kyrpides N."/>
            <person name="Mikhailova N."/>
            <person name="Emerson D."/>
            <person name="Newman D.K."/>
            <person name="Roden E."/>
            <person name="Richardson P."/>
        </authorList>
    </citation>
    <scope>NUCLEOTIDE SEQUENCE [LARGE SCALE GENOMIC DNA]</scope>
    <source>
        <strain>TIE-1</strain>
    </source>
</reference>
<accession>B3QBX1</accession>
<protein>
    <recommendedName>
        <fullName evidence="1">Small ribosomal subunit protein uS17</fullName>
    </recommendedName>
    <alternativeName>
        <fullName evidence="2">30S ribosomal protein S17</fullName>
    </alternativeName>
</protein>
<feature type="chain" id="PRO_1000143293" description="Small ribosomal subunit protein uS17">
    <location>
        <begin position="1"/>
        <end position="82"/>
    </location>
</feature>
<gene>
    <name evidence="1" type="primary">rpsQ</name>
    <name type="ordered locus">Rpal_3658</name>
</gene>
<comment type="function">
    <text evidence="1">One of the primary rRNA binding proteins, it binds specifically to the 5'-end of 16S ribosomal RNA.</text>
</comment>
<comment type="subunit">
    <text evidence="1">Part of the 30S ribosomal subunit.</text>
</comment>
<comment type="similarity">
    <text evidence="1">Belongs to the universal ribosomal protein uS17 family.</text>
</comment>
<keyword id="KW-0687">Ribonucleoprotein</keyword>
<keyword id="KW-0689">Ribosomal protein</keyword>
<keyword id="KW-0694">RNA-binding</keyword>
<keyword id="KW-0699">rRNA-binding</keyword>